<proteinExistence type="inferred from homology"/>
<organism>
    <name type="scientific">Burkholderia pseudomallei (strain 1106a)</name>
    <dbReference type="NCBI Taxonomy" id="357348"/>
    <lineage>
        <taxon>Bacteria</taxon>
        <taxon>Pseudomonadati</taxon>
        <taxon>Pseudomonadota</taxon>
        <taxon>Betaproteobacteria</taxon>
        <taxon>Burkholderiales</taxon>
        <taxon>Burkholderiaceae</taxon>
        <taxon>Burkholderia</taxon>
        <taxon>pseudomallei group</taxon>
    </lineage>
</organism>
<evidence type="ECO:0000255" key="1">
    <source>
        <dbReference type="HAMAP-Rule" id="MF_01970"/>
    </source>
</evidence>
<name>KYNU_BURP0</name>
<feature type="chain" id="PRO_0000356999" description="Kynureninase">
    <location>
        <begin position="1"/>
        <end position="416"/>
    </location>
</feature>
<feature type="binding site" evidence="1">
    <location>
        <position position="97"/>
    </location>
    <ligand>
        <name>pyridoxal 5'-phosphate</name>
        <dbReference type="ChEBI" id="CHEBI:597326"/>
    </ligand>
</feature>
<feature type="binding site" evidence="1">
    <location>
        <position position="98"/>
    </location>
    <ligand>
        <name>pyridoxal 5'-phosphate</name>
        <dbReference type="ChEBI" id="CHEBI:597326"/>
    </ligand>
</feature>
<feature type="binding site" evidence="1">
    <location>
        <begin position="129"/>
        <end position="132"/>
    </location>
    <ligand>
        <name>pyridoxal 5'-phosphate</name>
        <dbReference type="ChEBI" id="CHEBI:597326"/>
    </ligand>
</feature>
<feature type="binding site" evidence="1">
    <location>
        <position position="172"/>
    </location>
    <ligand>
        <name>pyridoxal 5'-phosphate</name>
        <dbReference type="ChEBI" id="CHEBI:597326"/>
    </ligand>
</feature>
<feature type="binding site" evidence="1">
    <location>
        <position position="201"/>
    </location>
    <ligand>
        <name>pyridoxal 5'-phosphate</name>
        <dbReference type="ChEBI" id="CHEBI:597326"/>
    </ligand>
</feature>
<feature type="binding site" evidence="1">
    <location>
        <position position="204"/>
    </location>
    <ligand>
        <name>pyridoxal 5'-phosphate</name>
        <dbReference type="ChEBI" id="CHEBI:597326"/>
    </ligand>
</feature>
<feature type="binding site" evidence="1">
    <location>
        <position position="226"/>
    </location>
    <ligand>
        <name>pyridoxal 5'-phosphate</name>
        <dbReference type="ChEBI" id="CHEBI:597326"/>
    </ligand>
</feature>
<feature type="binding site" evidence="1">
    <location>
        <position position="256"/>
    </location>
    <ligand>
        <name>pyridoxal 5'-phosphate</name>
        <dbReference type="ChEBI" id="CHEBI:597326"/>
    </ligand>
</feature>
<feature type="binding site" evidence="1">
    <location>
        <position position="282"/>
    </location>
    <ligand>
        <name>pyridoxal 5'-phosphate</name>
        <dbReference type="ChEBI" id="CHEBI:597326"/>
    </ligand>
</feature>
<feature type="modified residue" description="N6-(pyridoxal phosphate)lysine" evidence="1">
    <location>
        <position position="227"/>
    </location>
</feature>
<comment type="function">
    <text evidence="1">Catalyzes the cleavage of L-kynurenine (L-Kyn) and L-3-hydroxykynurenine (L-3OHKyn) into anthranilic acid (AA) and 3-hydroxyanthranilic acid (3-OHAA), respectively.</text>
</comment>
<comment type="catalytic activity">
    <reaction evidence="1">
        <text>L-kynurenine + H2O = anthranilate + L-alanine + H(+)</text>
        <dbReference type="Rhea" id="RHEA:16813"/>
        <dbReference type="ChEBI" id="CHEBI:15377"/>
        <dbReference type="ChEBI" id="CHEBI:15378"/>
        <dbReference type="ChEBI" id="CHEBI:16567"/>
        <dbReference type="ChEBI" id="CHEBI:57959"/>
        <dbReference type="ChEBI" id="CHEBI:57972"/>
        <dbReference type="EC" id="3.7.1.3"/>
    </reaction>
</comment>
<comment type="catalytic activity">
    <reaction evidence="1">
        <text>3-hydroxy-L-kynurenine + H2O = 3-hydroxyanthranilate + L-alanine + H(+)</text>
        <dbReference type="Rhea" id="RHEA:25143"/>
        <dbReference type="ChEBI" id="CHEBI:15377"/>
        <dbReference type="ChEBI" id="CHEBI:15378"/>
        <dbReference type="ChEBI" id="CHEBI:36559"/>
        <dbReference type="ChEBI" id="CHEBI:57972"/>
        <dbReference type="ChEBI" id="CHEBI:58125"/>
        <dbReference type="EC" id="3.7.1.3"/>
    </reaction>
</comment>
<comment type="cofactor">
    <cofactor evidence="1">
        <name>pyridoxal 5'-phosphate</name>
        <dbReference type="ChEBI" id="CHEBI:597326"/>
    </cofactor>
</comment>
<comment type="pathway">
    <text evidence="1">Amino-acid degradation; L-kynurenine degradation; L-alanine and anthranilate from L-kynurenine: step 1/1.</text>
</comment>
<comment type="pathway">
    <text evidence="1">Cofactor biosynthesis; NAD(+) biosynthesis; quinolinate from L-kynurenine: step 2/3.</text>
</comment>
<comment type="subunit">
    <text evidence="1">Homodimer.</text>
</comment>
<comment type="similarity">
    <text evidence="1">Belongs to the kynureninase family.</text>
</comment>
<dbReference type="EC" id="3.7.1.3" evidence="1"/>
<dbReference type="EMBL" id="CP000572">
    <property type="protein sequence ID" value="ABN89838.1"/>
    <property type="molecule type" value="Genomic_DNA"/>
</dbReference>
<dbReference type="RefSeq" id="WP_004522648.1">
    <property type="nucleotide sequence ID" value="NC_009076.1"/>
</dbReference>
<dbReference type="SMR" id="A3NS56"/>
<dbReference type="GeneID" id="93059353"/>
<dbReference type="KEGG" id="bpl:BURPS1106A_0896"/>
<dbReference type="HOGENOM" id="CLU_003433_4_1_4"/>
<dbReference type="UniPathway" id="UPA00253">
    <property type="reaction ID" value="UER00329"/>
</dbReference>
<dbReference type="UniPathway" id="UPA00334">
    <property type="reaction ID" value="UER00455"/>
</dbReference>
<dbReference type="Proteomes" id="UP000006738">
    <property type="component" value="Chromosome I"/>
</dbReference>
<dbReference type="GO" id="GO:0005737">
    <property type="term" value="C:cytoplasm"/>
    <property type="evidence" value="ECO:0007669"/>
    <property type="project" value="InterPro"/>
</dbReference>
<dbReference type="GO" id="GO:0030429">
    <property type="term" value="F:kynureninase activity"/>
    <property type="evidence" value="ECO:0007669"/>
    <property type="project" value="UniProtKB-UniRule"/>
</dbReference>
<dbReference type="GO" id="GO:0030170">
    <property type="term" value="F:pyridoxal phosphate binding"/>
    <property type="evidence" value="ECO:0007669"/>
    <property type="project" value="UniProtKB-UniRule"/>
</dbReference>
<dbReference type="GO" id="GO:0043420">
    <property type="term" value="P:anthranilate metabolic process"/>
    <property type="evidence" value="ECO:0007669"/>
    <property type="project" value="TreeGrafter"/>
</dbReference>
<dbReference type="GO" id="GO:0097053">
    <property type="term" value="P:L-kynurenine catabolic process"/>
    <property type="evidence" value="ECO:0007669"/>
    <property type="project" value="UniProtKB-UniRule"/>
</dbReference>
<dbReference type="GO" id="GO:0019441">
    <property type="term" value="P:L-tryptophan catabolic process to kynurenine"/>
    <property type="evidence" value="ECO:0007669"/>
    <property type="project" value="TreeGrafter"/>
</dbReference>
<dbReference type="GO" id="GO:0009435">
    <property type="term" value="P:NAD biosynthetic process"/>
    <property type="evidence" value="ECO:0007669"/>
    <property type="project" value="UniProtKB-UniPathway"/>
</dbReference>
<dbReference type="GO" id="GO:0019805">
    <property type="term" value="P:quinolinate biosynthetic process"/>
    <property type="evidence" value="ECO:0007669"/>
    <property type="project" value="UniProtKB-UniRule"/>
</dbReference>
<dbReference type="FunFam" id="3.40.640.10:FF:000107">
    <property type="entry name" value="Kynureninase"/>
    <property type="match status" value="1"/>
</dbReference>
<dbReference type="Gene3D" id="3.90.1150.10">
    <property type="entry name" value="Aspartate Aminotransferase, domain 1"/>
    <property type="match status" value="1"/>
</dbReference>
<dbReference type="Gene3D" id="3.40.640.10">
    <property type="entry name" value="Type I PLP-dependent aspartate aminotransferase-like (Major domain)"/>
    <property type="match status" value="1"/>
</dbReference>
<dbReference type="HAMAP" id="MF_01970">
    <property type="entry name" value="Kynureninase"/>
    <property type="match status" value="1"/>
</dbReference>
<dbReference type="InterPro" id="IPR010111">
    <property type="entry name" value="Kynureninase"/>
</dbReference>
<dbReference type="InterPro" id="IPR015424">
    <property type="entry name" value="PyrdxlP-dep_Trfase"/>
</dbReference>
<dbReference type="InterPro" id="IPR015421">
    <property type="entry name" value="PyrdxlP-dep_Trfase_major"/>
</dbReference>
<dbReference type="InterPro" id="IPR015422">
    <property type="entry name" value="PyrdxlP-dep_Trfase_small"/>
</dbReference>
<dbReference type="NCBIfam" id="TIGR01814">
    <property type="entry name" value="kynureninase"/>
    <property type="match status" value="1"/>
</dbReference>
<dbReference type="PANTHER" id="PTHR14084">
    <property type="entry name" value="KYNURENINASE"/>
    <property type="match status" value="1"/>
</dbReference>
<dbReference type="PANTHER" id="PTHR14084:SF0">
    <property type="entry name" value="KYNURENINASE"/>
    <property type="match status" value="1"/>
</dbReference>
<dbReference type="Pfam" id="PF22580">
    <property type="entry name" value="KYNU_C"/>
    <property type="match status" value="1"/>
</dbReference>
<dbReference type="PIRSF" id="PIRSF038800">
    <property type="entry name" value="KYNU"/>
    <property type="match status" value="1"/>
</dbReference>
<dbReference type="SUPFAM" id="SSF53383">
    <property type="entry name" value="PLP-dependent transferases"/>
    <property type="match status" value="1"/>
</dbReference>
<reference key="1">
    <citation type="journal article" date="2010" name="Genome Biol. Evol.">
        <title>Continuing evolution of Burkholderia mallei through genome reduction and large-scale rearrangements.</title>
        <authorList>
            <person name="Losada L."/>
            <person name="Ronning C.M."/>
            <person name="DeShazer D."/>
            <person name="Woods D."/>
            <person name="Fedorova N."/>
            <person name="Kim H.S."/>
            <person name="Shabalina S.A."/>
            <person name="Pearson T.R."/>
            <person name="Brinkac L."/>
            <person name="Tan P."/>
            <person name="Nandi T."/>
            <person name="Crabtree J."/>
            <person name="Badger J."/>
            <person name="Beckstrom-Sternberg S."/>
            <person name="Saqib M."/>
            <person name="Schutzer S.E."/>
            <person name="Keim P."/>
            <person name="Nierman W.C."/>
        </authorList>
    </citation>
    <scope>NUCLEOTIDE SEQUENCE [LARGE SCALE GENOMIC DNA]</scope>
    <source>
        <strain>1106a</strain>
    </source>
</reference>
<gene>
    <name evidence="1" type="primary">kynU</name>
    <name type="ordered locus">BURPS1106A_0896</name>
</gene>
<accession>A3NS56</accession>
<protein>
    <recommendedName>
        <fullName evidence="1">Kynureninase</fullName>
        <ecNumber evidence="1">3.7.1.3</ecNumber>
    </recommendedName>
    <alternativeName>
        <fullName evidence="1">L-kynurenine hydrolase</fullName>
    </alternativeName>
</protein>
<keyword id="KW-0378">Hydrolase</keyword>
<keyword id="KW-0662">Pyridine nucleotide biosynthesis</keyword>
<keyword id="KW-0663">Pyridoxal phosphate</keyword>
<sequence length="416" mass="45864">MKTREEALALDRDDPLAPLREQFALPAGVIYLDGNSLGAQPRAAAARAQQVIGAEWGEGLIRSWNTAGWFALPRRLGDRLAPLIGAADGEVAITDTISINLFKLLAAMLRHQARHAPKRRVIVSERSNFPTDLYIAQGLIAQLDRDYELRLIDDPADLPDALDDETAVAMITHVNYRTGYMHDMPSVTQTVRQAGALMLWDLAHSAGAVPVDLNGALADGAVGCTYKYLNGGPGSPAFVWVPKRHQRAFEQPLSGWWGHRAPFAMQPAFEPDPGIARFLCGTQPIVSMSMVECGLDVFAQTDMHAIRRKSLALTDAFVALVESRCAGQPLKLVTPRAHHQRGSQASFEHPHGYEVMQALIARGVIGDYREPRILRFGFTPLYTRFVDVWDAVETLRDILDTEAWRAPEFATRAAVT</sequence>